<dbReference type="EC" id="6.1.1.15" evidence="1"/>
<dbReference type="EMBL" id="CP000887">
    <property type="protein sequence ID" value="ACD72308.1"/>
    <property type="molecule type" value="Genomic_DNA"/>
</dbReference>
<dbReference type="RefSeq" id="WP_002968728.1">
    <property type="nucleotide sequence ID" value="NC_010742.1"/>
</dbReference>
<dbReference type="SMR" id="B2S561"/>
<dbReference type="GeneID" id="93016793"/>
<dbReference type="KEGG" id="bmc:BAbS19_I07840"/>
<dbReference type="HOGENOM" id="CLU_016739_4_2_5"/>
<dbReference type="Proteomes" id="UP000002565">
    <property type="component" value="Chromosome 1"/>
</dbReference>
<dbReference type="GO" id="GO:0005829">
    <property type="term" value="C:cytosol"/>
    <property type="evidence" value="ECO:0007669"/>
    <property type="project" value="TreeGrafter"/>
</dbReference>
<dbReference type="GO" id="GO:0005524">
    <property type="term" value="F:ATP binding"/>
    <property type="evidence" value="ECO:0007669"/>
    <property type="project" value="UniProtKB-UniRule"/>
</dbReference>
<dbReference type="GO" id="GO:0004827">
    <property type="term" value="F:proline-tRNA ligase activity"/>
    <property type="evidence" value="ECO:0007669"/>
    <property type="project" value="UniProtKB-UniRule"/>
</dbReference>
<dbReference type="GO" id="GO:0006433">
    <property type="term" value="P:prolyl-tRNA aminoacylation"/>
    <property type="evidence" value="ECO:0007669"/>
    <property type="project" value="UniProtKB-UniRule"/>
</dbReference>
<dbReference type="CDD" id="cd00861">
    <property type="entry name" value="ProRS_anticodon_short"/>
    <property type="match status" value="1"/>
</dbReference>
<dbReference type="CDD" id="cd00779">
    <property type="entry name" value="ProRS_core_prok"/>
    <property type="match status" value="1"/>
</dbReference>
<dbReference type="FunFam" id="3.30.930.10:FF:000042">
    <property type="entry name" value="probable proline--tRNA ligase, mitochondrial"/>
    <property type="match status" value="1"/>
</dbReference>
<dbReference type="FunFam" id="3.40.50.800:FF:000032">
    <property type="entry name" value="Proline--tRNA ligase"/>
    <property type="match status" value="1"/>
</dbReference>
<dbReference type="Gene3D" id="3.40.50.800">
    <property type="entry name" value="Anticodon-binding domain"/>
    <property type="match status" value="1"/>
</dbReference>
<dbReference type="Gene3D" id="3.30.930.10">
    <property type="entry name" value="Bira Bifunctional Protein, Domain 2"/>
    <property type="match status" value="1"/>
</dbReference>
<dbReference type="HAMAP" id="MF_01570">
    <property type="entry name" value="Pro_tRNA_synth_type2"/>
    <property type="match status" value="1"/>
</dbReference>
<dbReference type="InterPro" id="IPR002314">
    <property type="entry name" value="aa-tRNA-synt_IIb"/>
</dbReference>
<dbReference type="InterPro" id="IPR006195">
    <property type="entry name" value="aa-tRNA-synth_II"/>
</dbReference>
<dbReference type="InterPro" id="IPR045864">
    <property type="entry name" value="aa-tRNA-synth_II/BPL/LPL"/>
</dbReference>
<dbReference type="InterPro" id="IPR004154">
    <property type="entry name" value="Anticodon-bd"/>
</dbReference>
<dbReference type="InterPro" id="IPR036621">
    <property type="entry name" value="Anticodon-bd_dom_sf"/>
</dbReference>
<dbReference type="InterPro" id="IPR002316">
    <property type="entry name" value="Pro-tRNA-ligase_IIa"/>
</dbReference>
<dbReference type="InterPro" id="IPR004500">
    <property type="entry name" value="Pro-tRNA-synth_IIa_bac-type"/>
</dbReference>
<dbReference type="InterPro" id="IPR050062">
    <property type="entry name" value="Pro-tRNA_synthetase"/>
</dbReference>
<dbReference type="InterPro" id="IPR023716">
    <property type="entry name" value="Prolyl-tRNA_ligase_IIa_type2"/>
</dbReference>
<dbReference type="InterPro" id="IPR044140">
    <property type="entry name" value="ProRS_anticodon_short"/>
</dbReference>
<dbReference type="InterPro" id="IPR033730">
    <property type="entry name" value="ProRS_core_prok"/>
</dbReference>
<dbReference type="NCBIfam" id="NF008979">
    <property type="entry name" value="PRK12325.1"/>
    <property type="match status" value="1"/>
</dbReference>
<dbReference type="NCBIfam" id="TIGR00409">
    <property type="entry name" value="proS_fam_II"/>
    <property type="match status" value="1"/>
</dbReference>
<dbReference type="PANTHER" id="PTHR42753">
    <property type="entry name" value="MITOCHONDRIAL RIBOSOME PROTEIN L39/PROLYL-TRNA LIGASE FAMILY MEMBER"/>
    <property type="match status" value="1"/>
</dbReference>
<dbReference type="PANTHER" id="PTHR42753:SF2">
    <property type="entry name" value="PROLINE--TRNA LIGASE"/>
    <property type="match status" value="1"/>
</dbReference>
<dbReference type="Pfam" id="PF03129">
    <property type="entry name" value="HGTP_anticodon"/>
    <property type="match status" value="1"/>
</dbReference>
<dbReference type="Pfam" id="PF00587">
    <property type="entry name" value="tRNA-synt_2b"/>
    <property type="match status" value="1"/>
</dbReference>
<dbReference type="PRINTS" id="PR01046">
    <property type="entry name" value="TRNASYNTHPRO"/>
</dbReference>
<dbReference type="SUPFAM" id="SSF52954">
    <property type="entry name" value="Class II aaRS ABD-related"/>
    <property type="match status" value="1"/>
</dbReference>
<dbReference type="SUPFAM" id="SSF55681">
    <property type="entry name" value="Class II aaRS and biotin synthetases"/>
    <property type="match status" value="1"/>
</dbReference>
<dbReference type="PROSITE" id="PS50862">
    <property type="entry name" value="AA_TRNA_LIGASE_II"/>
    <property type="match status" value="1"/>
</dbReference>
<evidence type="ECO:0000255" key="1">
    <source>
        <dbReference type="HAMAP-Rule" id="MF_01570"/>
    </source>
</evidence>
<reference key="1">
    <citation type="journal article" date="2008" name="PLoS ONE">
        <title>Genome sequence of Brucella abortus vaccine strain S19 compared to virulent strains yields candidate virulence genes.</title>
        <authorList>
            <person name="Crasta O.R."/>
            <person name="Folkerts O."/>
            <person name="Fei Z."/>
            <person name="Mane S.P."/>
            <person name="Evans C."/>
            <person name="Martino-Catt S."/>
            <person name="Bricker B."/>
            <person name="Yu G."/>
            <person name="Du L."/>
            <person name="Sobral B.W."/>
        </authorList>
    </citation>
    <scope>NUCLEOTIDE SEQUENCE [LARGE SCALE GENOMIC DNA]</scope>
    <source>
        <strain>S19</strain>
    </source>
</reference>
<gene>
    <name evidence="1" type="primary">proS</name>
    <name type="ordered locus">BAbS19_I07840</name>
</gene>
<feature type="chain" id="PRO_1000199449" description="Proline--tRNA ligase">
    <location>
        <begin position="1"/>
        <end position="442"/>
    </location>
</feature>
<protein>
    <recommendedName>
        <fullName evidence="1">Proline--tRNA ligase</fullName>
        <ecNumber evidence="1">6.1.1.15</ecNumber>
    </recommendedName>
    <alternativeName>
        <fullName evidence="1">Prolyl-tRNA synthetase</fullName>
        <shortName evidence="1">ProRS</shortName>
    </alternativeName>
</protein>
<accession>B2S561</accession>
<organism>
    <name type="scientific">Brucella abortus (strain S19)</name>
    <dbReference type="NCBI Taxonomy" id="430066"/>
    <lineage>
        <taxon>Bacteria</taxon>
        <taxon>Pseudomonadati</taxon>
        <taxon>Pseudomonadota</taxon>
        <taxon>Alphaproteobacteria</taxon>
        <taxon>Hyphomicrobiales</taxon>
        <taxon>Brucellaceae</taxon>
        <taxon>Brucella/Ochrobactrum group</taxon>
        <taxon>Brucella</taxon>
    </lineage>
</organism>
<comment type="function">
    <text evidence="1">Catalyzes the attachment of proline to tRNA(Pro) in a two-step reaction: proline is first activated by ATP to form Pro-AMP and then transferred to the acceptor end of tRNA(Pro).</text>
</comment>
<comment type="catalytic activity">
    <reaction evidence="1">
        <text>tRNA(Pro) + L-proline + ATP = L-prolyl-tRNA(Pro) + AMP + diphosphate</text>
        <dbReference type="Rhea" id="RHEA:14305"/>
        <dbReference type="Rhea" id="RHEA-COMP:9700"/>
        <dbReference type="Rhea" id="RHEA-COMP:9702"/>
        <dbReference type="ChEBI" id="CHEBI:30616"/>
        <dbReference type="ChEBI" id="CHEBI:33019"/>
        <dbReference type="ChEBI" id="CHEBI:60039"/>
        <dbReference type="ChEBI" id="CHEBI:78442"/>
        <dbReference type="ChEBI" id="CHEBI:78532"/>
        <dbReference type="ChEBI" id="CHEBI:456215"/>
        <dbReference type="EC" id="6.1.1.15"/>
    </reaction>
</comment>
<comment type="subunit">
    <text evidence="1">Homodimer.</text>
</comment>
<comment type="subcellular location">
    <subcellularLocation>
        <location evidence="1">Cytoplasm</location>
    </subcellularLocation>
</comment>
<comment type="similarity">
    <text evidence="1">Belongs to the class-II aminoacyl-tRNA synthetase family. ProS type 2 subfamily.</text>
</comment>
<name>SYP_BRUA1</name>
<proteinExistence type="inferred from homology"/>
<sequence length="442" mass="49507">MRLSRYFLPILKENPKEAEIVSHRLMLRSGMIRQQSAGIYSWLPIGLKVLNKVCTIIREEQNRAGANEILMPTIQSADLWRESGRYDAYGKEMLRIQDRQKREMLFGPTNEEMVTDIFRSYVRSYKDLPLNLYHIQWKFRDEVRPRFGVMRSREFLMKDAYSFDLDYEGAKMAYYRMFVSYLRTFARVGLQAIPMRADTGPIGGDLSHEFIILAETGESQVYCDRAYLDLAVPGADTDFRNDAQLTDIVTRWTTPYAATDEMHDEADWAKVKPESQVSARGIEVGHIFHFGTKYSEPMGAKVQGPDGKEHLVSMGSYGIGPSRLVAAAIEASHDDAGIIWPKTIAPFGAGIVNMKPGDEGCDGVSEKLYEALTNAGVDPLLDDKDERPGAKFATMDLIGLPTQVIVGPRGVAAGEVEVKDRKTGERQSLGIKAAINMLTAQA</sequence>
<keyword id="KW-0030">Aminoacyl-tRNA synthetase</keyword>
<keyword id="KW-0067">ATP-binding</keyword>
<keyword id="KW-0963">Cytoplasm</keyword>
<keyword id="KW-0436">Ligase</keyword>
<keyword id="KW-0547">Nucleotide-binding</keyword>
<keyword id="KW-0648">Protein biosynthesis</keyword>